<gene>
    <name evidence="1" type="primary">fliE</name>
    <name type="ordered locus">Neut_0748</name>
</gene>
<evidence type="ECO:0000255" key="1">
    <source>
        <dbReference type="HAMAP-Rule" id="MF_00724"/>
    </source>
</evidence>
<feature type="chain" id="PRO_1000045860" description="Flagellar hook-basal body complex protein FliE">
    <location>
        <begin position="1"/>
        <end position="109"/>
    </location>
</feature>
<proteinExistence type="inferred from homology"/>
<name>FLIE_NITEC</name>
<accession>Q0AI14</accession>
<organism>
    <name type="scientific">Nitrosomonas eutropha (strain DSM 101675 / C91 / Nm57)</name>
    <dbReference type="NCBI Taxonomy" id="335283"/>
    <lineage>
        <taxon>Bacteria</taxon>
        <taxon>Pseudomonadati</taxon>
        <taxon>Pseudomonadota</taxon>
        <taxon>Betaproteobacteria</taxon>
        <taxon>Nitrosomonadales</taxon>
        <taxon>Nitrosomonadaceae</taxon>
        <taxon>Nitrosomonas</taxon>
    </lineage>
</organism>
<sequence>MNIASGMNQMLAQLKATSDLAAGGNKPAAVAPAASQADFGQLLKSAVDQVNTVQQTANQLSQEFVRGNQDVELHDVMISLQKANVSFQSMIQVRNRLVTAYQEIMNMQV</sequence>
<comment type="subcellular location">
    <subcellularLocation>
        <location evidence="1">Bacterial flagellum basal body</location>
    </subcellularLocation>
</comment>
<comment type="similarity">
    <text evidence="1">Belongs to the FliE family.</text>
</comment>
<protein>
    <recommendedName>
        <fullName evidence="1">Flagellar hook-basal body complex protein FliE</fullName>
    </recommendedName>
</protein>
<keyword id="KW-0975">Bacterial flagellum</keyword>
<reference key="1">
    <citation type="journal article" date="2007" name="Environ. Microbiol.">
        <title>Whole-genome analysis of the ammonia-oxidizing bacterium, Nitrosomonas eutropha C91: implications for niche adaptation.</title>
        <authorList>
            <person name="Stein L.Y."/>
            <person name="Arp D.J."/>
            <person name="Berube P.M."/>
            <person name="Chain P.S."/>
            <person name="Hauser L."/>
            <person name="Jetten M.S."/>
            <person name="Klotz M.G."/>
            <person name="Larimer F.W."/>
            <person name="Norton J.M."/>
            <person name="Op den Camp H.J.M."/>
            <person name="Shin M."/>
            <person name="Wei X."/>
        </authorList>
    </citation>
    <scope>NUCLEOTIDE SEQUENCE [LARGE SCALE GENOMIC DNA]</scope>
    <source>
        <strain>DSM 101675 / C91 / Nm57</strain>
    </source>
</reference>
<dbReference type="EMBL" id="CP000450">
    <property type="protein sequence ID" value="ABI59018.1"/>
    <property type="molecule type" value="Genomic_DNA"/>
</dbReference>
<dbReference type="RefSeq" id="WP_011633843.1">
    <property type="nucleotide sequence ID" value="NC_008344.1"/>
</dbReference>
<dbReference type="SMR" id="Q0AI14"/>
<dbReference type="STRING" id="335283.Neut_0748"/>
<dbReference type="KEGG" id="net:Neut_0748"/>
<dbReference type="eggNOG" id="COG1677">
    <property type="taxonomic scope" value="Bacteria"/>
</dbReference>
<dbReference type="HOGENOM" id="CLU_147249_0_0_4"/>
<dbReference type="OrthoDB" id="8909229at2"/>
<dbReference type="Proteomes" id="UP000001966">
    <property type="component" value="Chromosome"/>
</dbReference>
<dbReference type="GO" id="GO:0009425">
    <property type="term" value="C:bacterial-type flagellum basal body"/>
    <property type="evidence" value="ECO:0007669"/>
    <property type="project" value="UniProtKB-SubCell"/>
</dbReference>
<dbReference type="GO" id="GO:0003774">
    <property type="term" value="F:cytoskeletal motor activity"/>
    <property type="evidence" value="ECO:0007669"/>
    <property type="project" value="InterPro"/>
</dbReference>
<dbReference type="GO" id="GO:0005198">
    <property type="term" value="F:structural molecule activity"/>
    <property type="evidence" value="ECO:0007669"/>
    <property type="project" value="InterPro"/>
</dbReference>
<dbReference type="GO" id="GO:0071973">
    <property type="term" value="P:bacterial-type flagellum-dependent cell motility"/>
    <property type="evidence" value="ECO:0007669"/>
    <property type="project" value="InterPro"/>
</dbReference>
<dbReference type="HAMAP" id="MF_00724">
    <property type="entry name" value="FliE"/>
    <property type="match status" value="1"/>
</dbReference>
<dbReference type="InterPro" id="IPR001624">
    <property type="entry name" value="FliE"/>
</dbReference>
<dbReference type="NCBIfam" id="TIGR00205">
    <property type="entry name" value="fliE"/>
    <property type="match status" value="1"/>
</dbReference>
<dbReference type="PANTHER" id="PTHR34653">
    <property type="match status" value="1"/>
</dbReference>
<dbReference type="PANTHER" id="PTHR34653:SF1">
    <property type="entry name" value="FLAGELLAR HOOK-BASAL BODY COMPLEX PROTEIN FLIE"/>
    <property type="match status" value="1"/>
</dbReference>
<dbReference type="Pfam" id="PF02049">
    <property type="entry name" value="FliE"/>
    <property type="match status" value="1"/>
</dbReference>
<dbReference type="PRINTS" id="PR01006">
    <property type="entry name" value="FLGHOOKFLIE"/>
</dbReference>